<keyword id="KW-0966">Cell projection</keyword>
<keyword id="KW-0963">Cytoplasm</keyword>
<keyword id="KW-0206">Cytoskeleton</keyword>
<keyword id="KW-0268">Exocytosis</keyword>
<keyword id="KW-0653">Protein transport</keyword>
<keyword id="KW-1185">Reference proteome</keyword>
<keyword id="KW-0813">Transport</keyword>
<proteinExistence type="inferred from homology"/>
<name>EXOC4_DICDI</name>
<gene>
    <name type="primary">exoc4</name>
    <name type="synonym">sec8</name>
    <name type="ORF">DDB_G0284833</name>
</gene>
<accession>Q54P76</accession>
<comment type="function">
    <text evidence="1">Component of the exocyst complex involved in the docking of exocytic vesicles with fusion sites on the plasma membrane.</text>
</comment>
<comment type="subunit">
    <text evidence="1">The exocyst complex is composed of sec3/exoc1, sec5/exoc2, sec6/exoc3, sec8/exoc4, sec10/exoc5, sec15/exoc6, exo70/exoc7 and exo84/exoc8.</text>
</comment>
<comment type="subcellular location">
    <subcellularLocation>
        <location evidence="2">Midbody</location>
        <location evidence="2">Midbody ring</location>
    </subcellularLocation>
    <subcellularLocation>
        <location evidence="1">Cell projection</location>
    </subcellularLocation>
    <subcellularLocation>
        <location evidence="2">Cytoplasm</location>
        <location evidence="2">Cytoskeleton</location>
        <location evidence="2">Microtubule organizing center</location>
        <location evidence="2">Centrosome</location>
    </subcellularLocation>
</comment>
<comment type="similarity">
    <text evidence="4">Belongs to the SEC8 family.</text>
</comment>
<reference key="1">
    <citation type="journal article" date="2005" name="Nature">
        <title>The genome of the social amoeba Dictyostelium discoideum.</title>
        <authorList>
            <person name="Eichinger L."/>
            <person name="Pachebat J.A."/>
            <person name="Gloeckner G."/>
            <person name="Rajandream M.A."/>
            <person name="Sucgang R."/>
            <person name="Berriman M."/>
            <person name="Song J."/>
            <person name="Olsen R."/>
            <person name="Szafranski K."/>
            <person name="Xu Q."/>
            <person name="Tunggal B."/>
            <person name="Kummerfeld S."/>
            <person name="Madera M."/>
            <person name="Konfortov B.A."/>
            <person name="Rivero F."/>
            <person name="Bankier A.T."/>
            <person name="Lehmann R."/>
            <person name="Hamlin N."/>
            <person name="Davies R."/>
            <person name="Gaudet P."/>
            <person name="Fey P."/>
            <person name="Pilcher K."/>
            <person name="Chen G."/>
            <person name="Saunders D."/>
            <person name="Sodergren E.J."/>
            <person name="Davis P."/>
            <person name="Kerhornou A."/>
            <person name="Nie X."/>
            <person name="Hall N."/>
            <person name="Anjard C."/>
            <person name="Hemphill L."/>
            <person name="Bason N."/>
            <person name="Farbrother P."/>
            <person name="Desany B."/>
            <person name="Just E."/>
            <person name="Morio T."/>
            <person name="Rost R."/>
            <person name="Churcher C.M."/>
            <person name="Cooper J."/>
            <person name="Haydock S."/>
            <person name="van Driessche N."/>
            <person name="Cronin A."/>
            <person name="Goodhead I."/>
            <person name="Muzny D.M."/>
            <person name="Mourier T."/>
            <person name="Pain A."/>
            <person name="Lu M."/>
            <person name="Harper D."/>
            <person name="Lindsay R."/>
            <person name="Hauser H."/>
            <person name="James K.D."/>
            <person name="Quiles M."/>
            <person name="Madan Babu M."/>
            <person name="Saito T."/>
            <person name="Buchrieser C."/>
            <person name="Wardroper A."/>
            <person name="Felder M."/>
            <person name="Thangavelu M."/>
            <person name="Johnson D."/>
            <person name="Knights A."/>
            <person name="Loulseged H."/>
            <person name="Mungall K.L."/>
            <person name="Oliver K."/>
            <person name="Price C."/>
            <person name="Quail M.A."/>
            <person name="Urushihara H."/>
            <person name="Hernandez J."/>
            <person name="Rabbinowitsch E."/>
            <person name="Steffen D."/>
            <person name="Sanders M."/>
            <person name="Ma J."/>
            <person name="Kohara Y."/>
            <person name="Sharp S."/>
            <person name="Simmonds M.N."/>
            <person name="Spiegler S."/>
            <person name="Tivey A."/>
            <person name="Sugano S."/>
            <person name="White B."/>
            <person name="Walker D."/>
            <person name="Woodward J.R."/>
            <person name="Winckler T."/>
            <person name="Tanaka Y."/>
            <person name="Shaulsky G."/>
            <person name="Schleicher M."/>
            <person name="Weinstock G.M."/>
            <person name="Rosenthal A."/>
            <person name="Cox E.C."/>
            <person name="Chisholm R.L."/>
            <person name="Gibbs R.A."/>
            <person name="Loomis W.F."/>
            <person name="Platzer M."/>
            <person name="Kay R.R."/>
            <person name="Williams J.G."/>
            <person name="Dear P.H."/>
            <person name="Noegel A.A."/>
            <person name="Barrell B.G."/>
            <person name="Kuspa A."/>
        </authorList>
    </citation>
    <scope>NUCLEOTIDE SEQUENCE [LARGE SCALE GENOMIC DNA]</scope>
    <source>
        <strain>AX4</strain>
    </source>
</reference>
<sequence>MDDNEEKKLDENKISKVLSSIPEQYHKTSFQARRTALDYMRSSNRKELLNQIGDWLDEVNVETDNIVDVYFQGFNKSIHNYSRILEFMGTSHGNALLMSKEVEETNKLINFNGTGIERLWKRNLEYYYMIEILEKMEELKKVPDLLNKYIKGNHFVHAANILVNSISTLNERDLVNVNALMDLRQMLVEKKESFKDMLVEKLNDHIYLKTKSSLKAFEYDDENNLQSNFKKILLSNKNSNSNNSNNTFKSPLPPTTTSPFKPQFTGAFQTKASQEKAEKAAANLYNQERLSQSNQPEVLKLEEISKTSNSKEDLNIDPEQDGKLFMTLLVEALNVLEYLSPAVGLILGRISIELKTAITNSITLITNVYHSEGRVIPKMPGESSNSSNGSNGSNGGGNNSMNGSGGINGNGSTASSSSPTSSTSSNIGANGLSPSVLSKNSHIGSATFSNIDEYSAAFNFLTETFNRNDLLANQTHNIPLVDLLKMIFNKVNMVFKNHLQLSKIFNDAIRKSELKIRANKFDFKEETEGGGGDSDNDFEGTPKPTKLQKSKVEIADVYDASLVWEIIQKEIREMLRVHLQDTSSLLLSTKSRLNPDGTESNSGKSQRLFSFTNSIVTDNWNGSISPMVTTSPTSPNGTSGADAIDSNSGGPAVISIFKASQYNVTPIYPMIVKFTDHLDKTLRDRTGTPTTTKTTTTITTTTTNSYHNQNSKKGLLRLYIDDFVHRNFLQHIKNDYKDRFAHSIESTEAFKPLERYKLVFRLKETKPILNSTLQIFQFVIELFSDIVAMSHYVVEFGAIIQVSLLRYYEKCLSKFSQEIDPTLTNQLLNTDLYKYLLASLAVSSKKQDVAKFQDSREEEYEFKLESDLFNHPEKPVLKNQLILNIEKLTMLANMSHSLNWLADKIVQLLIVQEDQKEKYTQQQQQQQQQQQQVDSIKTPSKLNSGINSGGNSTASNKENNSTTTGSNNFIGTFNQMSAESIEALKTMEEPIKDIAQRFKDLSKRCLLALRIEYRIHCFYFLEGFKRAQYMCEEERTDPDSFIVELNKDLSASEEMMSIYLTSDKCNFLFSGIAKLIGKLLISKLVHVNSINDNGVAKLCKNVFTLQQNLSNIIVKREIFFDRIRQFYQALSAEDELLNYLLEKMSQPFFSLEEGKIIIDFLQRTKRISPNAILTLEAKYKNM</sequence>
<protein>
    <recommendedName>
        <fullName>Exocyst complex component 4</fullName>
    </recommendedName>
    <alternativeName>
        <fullName>Exocyst complex component Sec8</fullName>
    </alternativeName>
</protein>
<organism>
    <name type="scientific">Dictyostelium discoideum</name>
    <name type="common">Social amoeba</name>
    <dbReference type="NCBI Taxonomy" id="44689"/>
    <lineage>
        <taxon>Eukaryota</taxon>
        <taxon>Amoebozoa</taxon>
        <taxon>Evosea</taxon>
        <taxon>Eumycetozoa</taxon>
        <taxon>Dictyostelia</taxon>
        <taxon>Dictyosteliales</taxon>
        <taxon>Dictyosteliaceae</taxon>
        <taxon>Dictyostelium</taxon>
    </lineage>
</organism>
<evidence type="ECO:0000250" key="1">
    <source>
        <dbReference type="UniProtKB" id="Q62824"/>
    </source>
</evidence>
<evidence type="ECO:0000250" key="2">
    <source>
        <dbReference type="UniProtKB" id="Q96A65"/>
    </source>
</evidence>
<evidence type="ECO:0000256" key="3">
    <source>
        <dbReference type="SAM" id="MobiDB-lite"/>
    </source>
</evidence>
<evidence type="ECO:0000305" key="4"/>
<dbReference type="EMBL" id="AAFI02000071">
    <property type="protein sequence ID" value="EAL65069.1"/>
    <property type="molecule type" value="Genomic_DNA"/>
</dbReference>
<dbReference type="RefSeq" id="XP_638382.1">
    <property type="nucleotide sequence ID" value="XM_633290.1"/>
</dbReference>
<dbReference type="SMR" id="Q54P76"/>
<dbReference type="FunCoup" id="Q54P76">
    <property type="interactions" value="548"/>
</dbReference>
<dbReference type="STRING" id="44689.Q54P76"/>
<dbReference type="PaxDb" id="44689-DDB0233962"/>
<dbReference type="EnsemblProtists" id="EAL65069">
    <property type="protein sequence ID" value="EAL65069"/>
    <property type="gene ID" value="DDB_G0284833"/>
</dbReference>
<dbReference type="GeneID" id="8624751"/>
<dbReference type="KEGG" id="ddi:DDB_G0284833"/>
<dbReference type="dictyBase" id="DDB_G0284833">
    <property type="gene designation" value="exoc4"/>
</dbReference>
<dbReference type="VEuPathDB" id="AmoebaDB:DDB_G0284833"/>
<dbReference type="eggNOG" id="KOG3691">
    <property type="taxonomic scope" value="Eukaryota"/>
</dbReference>
<dbReference type="HOGENOM" id="CLU_009514_0_0_1"/>
<dbReference type="InParanoid" id="Q54P76"/>
<dbReference type="OMA" id="HMEVRCR"/>
<dbReference type="PhylomeDB" id="Q54P76"/>
<dbReference type="Reactome" id="R-DDI-264876">
    <property type="pathway name" value="Insulin processing"/>
</dbReference>
<dbReference type="PRO" id="PR:Q54P76"/>
<dbReference type="Proteomes" id="UP000002195">
    <property type="component" value="Chromosome 4"/>
</dbReference>
<dbReference type="GO" id="GO:0042995">
    <property type="term" value="C:cell projection"/>
    <property type="evidence" value="ECO:0007669"/>
    <property type="project" value="UniProtKB-SubCell"/>
</dbReference>
<dbReference type="GO" id="GO:0005813">
    <property type="term" value="C:centrosome"/>
    <property type="evidence" value="ECO:0000250"/>
    <property type="project" value="UniProtKB"/>
</dbReference>
<dbReference type="GO" id="GO:0000145">
    <property type="term" value="C:exocyst"/>
    <property type="evidence" value="ECO:0000314"/>
    <property type="project" value="dictyBase"/>
</dbReference>
<dbReference type="GO" id="GO:0090543">
    <property type="term" value="C:Flemming body"/>
    <property type="evidence" value="ECO:0007669"/>
    <property type="project" value="UniProtKB-SubCell"/>
</dbReference>
<dbReference type="GO" id="GO:0070177">
    <property type="term" value="P:contractile vacuole discharge"/>
    <property type="evidence" value="ECO:0000314"/>
    <property type="project" value="dictyBase"/>
</dbReference>
<dbReference type="GO" id="GO:0006887">
    <property type="term" value="P:exocytosis"/>
    <property type="evidence" value="ECO:0000318"/>
    <property type="project" value="GO_Central"/>
</dbReference>
<dbReference type="GO" id="GO:0006893">
    <property type="term" value="P:Golgi to plasma membrane transport"/>
    <property type="evidence" value="ECO:0000318"/>
    <property type="project" value="GO_Central"/>
</dbReference>
<dbReference type="GO" id="GO:0015031">
    <property type="term" value="P:protein transport"/>
    <property type="evidence" value="ECO:0007669"/>
    <property type="project" value="UniProtKB-KW"/>
</dbReference>
<dbReference type="GO" id="GO:0006904">
    <property type="term" value="P:vesicle docking involved in exocytosis"/>
    <property type="evidence" value="ECO:0007669"/>
    <property type="project" value="InterPro"/>
</dbReference>
<dbReference type="GO" id="GO:0090522">
    <property type="term" value="P:vesicle tethering involved in exocytosis"/>
    <property type="evidence" value="ECO:0007669"/>
    <property type="project" value="InterPro"/>
</dbReference>
<dbReference type="InterPro" id="IPR039682">
    <property type="entry name" value="Sec8/EXOC4"/>
</dbReference>
<dbReference type="InterPro" id="IPR007191">
    <property type="entry name" value="Sec8_exocyst_N"/>
</dbReference>
<dbReference type="InterPro" id="IPR048630">
    <property type="entry name" value="Sec8_M"/>
</dbReference>
<dbReference type="PANTHER" id="PTHR14146">
    <property type="entry name" value="EXOCYST COMPLEX COMPONENT 4"/>
    <property type="match status" value="1"/>
</dbReference>
<dbReference type="PANTHER" id="PTHR14146:SF0">
    <property type="entry name" value="EXOCYST COMPLEX COMPONENT 4"/>
    <property type="match status" value="1"/>
</dbReference>
<dbReference type="Pfam" id="PF20652">
    <property type="entry name" value="Sec8_C"/>
    <property type="match status" value="1"/>
</dbReference>
<dbReference type="Pfam" id="PF04048">
    <property type="entry name" value="Sec8_N"/>
    <property type="match status" value="1"/>
</dbReference>
<feature type="chain" id="PRO_0000329041" description="Exocyst complex component 4">
    <location>
        <begin position="1"/>
        <end position="1182"/>
    </location>
</feature>
<feature type="region of interest" description="Disordered" evidence="3">
    <location>
        <begin position="236"/>
        <end position="262"/>
    </location>
</feature>
<feature type="region of interest" description="Disordered" evidence="3">
    <location>
        <begin position="376"/>
        <end position="427"/>
    </location>
</feature>
<feature type="region of interest" description="Disordered" evidence="3">
    <location>
        <begin position="525"/>
        <end position="545"/>
    </location>
</feature>
<feature type="region of interest" description="Disordered" evidence="3">
    <location>
        <begin position="921"/>
        <end position="968"/>
    </location>
</feature>
<feature type="compositionally biased region" description="Low complexity" evidence="3">
    <location>
        <begin position="236"/>
        <end position="250"/>
    </location>
</feature>
<feature type="compositionally biased region" description="Gly residues" evidence="3">
    <location>
        <begin position="392"/>
        <end position="409"/>
    </location>
</feature>
<feature type="compositionally biased region" description="Low complexity" evidence="3">
    <location>
        <begin position="410"/>
        <end position="426"/>
    </location>
</feature>
<feature type="compositionally biased region" description="Low complexity" evidence="3">
    <location>
        <begin position="921"/>
        <end position="932"/>
    </location>
</feature>
<feature type="compositionally biased region" description="Polar residues" evidence="3">
    <location>
        <begin position="933"/>
        <end position="968"/>
    </location>
</feature>